<evidence type="ECO:0000255" key="1">
    <source>
        <dbReference type="HAMAP-Rule" id="MF_01182"/>
    </source>
</evidence>
<sequence length="478" mass="53757">MARKTLRARRFFSLIFPFFFITSVYAEQTPESAKTVTVEAKNETFAPQHPDQYQSWKATSEQSAREDALAEDPRLVILWAGYPFSRDYNKPRGHAYAVTDVRETLRTGAPKTAEDGPLPMACWSCKSPDVARLIQQEGEDGYFHGKWARGGPEIVNDLGCADCHNTASDDFAQGKPALTLSRPYAERAMEAIGKPFDKAGRFDQQSMVCGQCHVEYYFDGKNKAVKFPWDEGMKVENMEQYYDAIAFSDWTNSLSKTPMLKAQHPEYETWSAGIHGKNNVTCIDCHMPKVQNAEGKLYTDHKIGNPFDNFAQTCANCHTQDKASLQKVVAERKQAIHDLKIKVEDQLVHAHFEAKAAWDAGATDAEMKPILNDIRHAQWRWDLAIASHGIHMHAPEEGLRMLGSAMDKAADARTKLARLLATKGITHEIPLPDISTKEKAQKAIGLNMQQINAEKQDFLKTVVPQWEDQARKNGLLSQ</sequence>
<gene>
    <name evidence="1" type="primary">nrfA</name>
    <name type="ordered locus">SeD_A4671</name>
</gene>
<feature type="signal peptide" evidence="1">
    <location>
        <begin position="1"/>
        <end position="26"/>
    </location>
</feature>
<feature type="chain" id="PRO_1000138218" description="Cytochrome c-552">
    <location>
        <begin position="27"/>
        <end position="478"/>
    </location>
</feature>
<feature type="binding site" description="axial binding residue" evidence="1">
    <location>
        <position position="94"/>
    </location>
    <ligand>
        <name>heme c</name>
        <dbReference type="ChEBI" id="CHEBI:61717"/>
        <label>3</label>
    </ligand>
    <ligandPart>
        <name>Fe</name>
        <dbReference type="ChEBI" id="CHEBI:18248"/>
    </ligandPart>
</feature>
<feature type="binding site" description="covalent" evidence="1">
    <location>
        <position position="122"/>
    </location>
    <ligand>
        <name>heme</name>
        <dbReference type="ChEBI" id="CHEBI:30413"/>
        <label>1</label>
    </ligand>
</feature>
<feature type="binding site" description="covalent" evidence="1">
    <location>
        <position position="125"/>
    </location>
    <ligand>
        <name>heme</name>
        <dbReference type="ChEBI" id="CHEBI:30413"/>
        <label>1</label>
    </ligand>
</feature>
<feature type="binding site" description="axial binding residue" evidence="1">
    <location>
        <position position="126"/>
    </location>
    <ligand>
        <name>heme</name>
        <dbReference type="ChEBI" id="CHEBI:30413"/>
        <label>1</label>
    </ligand>
    <ligandPart>
        <name>Fe</name>
        <dbReference type="ChEBI" id="CHEBI:18248"/>
    </ligandPart>
</feature>
<feature type="binding site" description="covalent" evidence="1">
    <location>
        <position position="160"/>
    </location>
    <ligand>
        <name>heme c</name>
        <dbReference type="ChEBI" id="CHEBI:61717"/>
        <label>2</label>
    </ligand>
</feature>
<feature type="binding site" description="covalent" evidence="1">
    <location>
        <position position="163"/>
    </location>
    <ligand>
        <name>heme c</name>
        <dbReference type="ChEBI" id="CHEBI:61717"/>
        <label>2</label>
    </ligand>
</feature>
<feature type="binding site" description="axial binding residue" evidence="1">
    <location>
        <position position="164"/>
    </location>
    <ligand>
        <name>heme c</name>
        <dbReference type="ChEBI" id="CHEBI:61717"/>
        <label>2</label>
    </ligand>
    <ligandPart>
        <name>Fe</name>
        <dbReference type="ChEBI" id="CHEBI:18248"/>
    </ligandPart>
</feature>
<feature type="binding site" description="covalent" evidence="1">
    <location>
        <position position="209"/>
    </location>
    <ligand>
        <name>heme c</name>
        <dbReference type="ChEBI" id="CHEBI:61717"/>
        <label>3</label>
    </ligand>
</feature>
<feature type="binding site" description="covalent" evidence="1">
    <location>
        <position position="212"/>
    </location>
    <ligand>
        <name>heme c</name>
        <dbReference type="ChEBI" id="CHEBI:61717"/>
        <label>3</label>
    </ligand>
</feature>
<feature type="binding site" description="axial binding residue" evidence="1">
    <location>
        <position position="213"/>
    </location>
    <ligand>
        <name>heme c</name>
        <dbReference type="ChEBI" id="CHEBI:61717"/>
        <label>3</label>
    </ligand>
    <ligandPart>
        <name>Fe</name>
        <dbReference type="ChEBI" id="CHEBI:18248"/>
    </ligandPart>
</feature>
<feature type="binding site" evidence="1">
    <location>
        <position position="215"/>
    </location>
    <ligand>
        <name>Ca(2+)</name>
        <dbReference type="ChEBI" id="CHEBI:29108"/>
    </ligand>
</feature>
<feature type="binding site" evidence="1">
    <location>
        <position position="216"/>
    </location>
    <ligand>
        <name>Ca(2+)</name>
        <dbReference type="ChEBI" id="CHEBI:29108"/>
    </ligand>
</feature>
<feature type="binding site" evidence="1">
    <location>
        <position position="216"/>
    </location>
    <ligand>
        <name>substrate</name>
    </ligand>
</feature>
<feature type="binding site" evidence="1">
    <location>
        <position position="261"/>
    </location>
    <ligand>
        <name>Ca(2+)</name>
        <dbReference type="ChEBI" id="CHEBI:29108"/>
    </ligand>
</feature>
<feature type="binding site" evidence="1">
    <location>
        <position position="263"/>
    </location>
    <ligand>
        <name>Ca(2+)</name>
        <dbReference type="ChEBI" id="CHEBI:29108"/>
    </ligand>
</feature>
<feature type="binding site" evidence="1">
    <location>
        <position position="264"/>
    </location>
    <ligand>
        <name>substrate</name>
    </ligand>
</feature>
<feature type="binding site" description="axial binding residue" evidence="1">
    <location>
        <position position="275"/>
    </location>
    <ligand>
        <name>heme c</name>
        <dbReference type="ChEBI" id="CHEBI:61717"/>
        <label>5</label>
    </ligand>
    <ligandPart>
        <name>Fe</name>
        <dbReference type="ChEBI" id="CHEBI:18248"/>
    </ligandPart>
</feature>
<feature type="binding site" description="covalent" evidence="1">
    <location>
        <position position="282"/>
    </location>
    <ligand>
        <name>heme c</name>
        <dbReference type="ChEBI" id="CHEBI:61717"/>
        <label>4</label>
    </ligand>
</feature>
<feature type="binding site" description="covalent" evidence="1">
    <location>
        <position position="285"/>
    </location>
    <ligand>
        <name>heme c</name>
        <dbReference type="ChEBI" id="CHEBI:61717"/>
        <label>4</label>
    </ligand>
</feature>
<feature type="binding site" description="axial binding residue" evidence="1">
    <location>
        <position position="286"/>
    </location>
    <ligand>
        <name>heme c</name>
        <dbReference type="ChEBI" id="CHEBI:61717"/>
        <label>4</label>
    </ligand>
    <ligandPart>
        <name>Fe</name>
        <dbReference type="ChEBI" id="CHEBI:18248"/>
    </ligandPart>
</feature>
<feature type="binding site" description="axial binding residue" evidence="1">
    <location>
        <position position="301"/>
    </location>
    <ligand>
        <name>heme c</name>
        <dbReference type="ChEBI" id="CHEBI:61717"/>
        <label>2</label>
    </ligand>
    <ligandPart>
        <name>Fe</name>
        <dbReference type="ChEBI" id="CHEBI:18248"/>
    </ligandPart>
</feature>
<feature type="binding site" description="covalent" evidence="1">
    <location>
        <position position="314"/>
    </location>
    <ligand>
        <name>heme c</name>
        <dbReference type="ChEBI" id="CHEBI:61717"/>
        <label>5</label>
    </ligand>
</feature>
<feature type="binding site" description="covalent" evidence="1">
    <location>
        <position position="317"/>
    </location>
    <ligand>
        <name>heme c</name>
        <dbReference type="ChEBI" id="CHEBI:61717"/>
        <label>5</label>
    </ligand>
</feature>
<feature type="binding site" description="axial binding residue" evidence="1">
    <location>
        <position position="318"/>
    </location>
    <ligand>
        <name>heme c</name>
        <dbReference type="ChEBI" id="CHEBI:61717"/>
        <label>5</label>
    </ligand>
    <ligandPart>
        <name>Fe</name>
        <dbReference type="ChEBI" id="CHEBI:18248"/>
    </ligandPart>
</feature>
<feature type="binding site" description="axial binding residue" evidence="1">
    <location>
        <position position="393"/>
    </location>
    <ligand>
        <name>heme c</name>
        <dbReference type="ChEBI" id="CHEBI:61717"/>
        <label>4</label>
    </ligand>
    <ligandPart>
        <name>Fe</name>
        <dbReference type="ChEBI" id="CHEBI:18248"/>
    </ligandPart>
</feature>
<keyword id="KW-0106">Calcium</keyword>
<keyword id="KW-0249">Electron transport</keyword>
<keyword id="KW-0349">Heme</keyword>
<keyword id="KW-0408">Iron</keyword>
<keyword id="KW-0479">Metal-binding</keyword>
<keyword id="KW-0560">Oxidoreductase</keyword>
<keyword id="KW-0574">Periplasm</keyword>
<keyword id="KW-0732">Signal</keyword>
<keyword id="KW-0813">Transport</keyword>
<dbReference type="EC" id="1.7.2.2" evidence="1"/>
<dbReference type="EMBL" id="CP001144">
    <property type="protein sequence ID" value="ACH75632.1"/>
    <property type="molecule type" value="Genomic_DNA"/>
</dbReference>
<dbReference type="RefSeq" id="WP_000101775.1">
    <property type="nucleotide sequence ID" value="NC_011205.1"/>
</dbReference>
<dbReference type="SMR" id="B5FRF3"/>
<dbReference type="KEGG" id="sed:SeD_A4671"/>
<dbReference type="HOGENOM" id="CLU_035040_1_0_6"/>
<dbReference type="UniPathway" id="UPA00653"/>
<dbReference type="Proteomes" id="UP000008322">
    <property type="component" value="Chromosome"/>
</dbReference>
<dbReference type="GO" id="GO:0030288">
    <property type="term" value="C:outer membrane-bounded periplasmic space"/>
    <property type="evidence" value="ECO:0007669"/>
    <property type="project" value="TreeGrafter"/>
</dbReference>
<dbReference type="GO" id="GO:0005509">
    <property type="term" value="F:calcium ion binding"/>
    <property type="evidence" value="ECO:0007669"/>
    <property type="project" value="UniProtKB-UniRule"/>
</dbReference>
<dbReference type="GO" id="GO:0020037">
    <property type="term" value="F:heme binding"/>
    <property type="evidence" value="ECO:0007669"/>
    <property type="project" value="InterPro"/>
</dbReference>
<dbReference type="GO" id="GO:0005506">
    <property type="term" value="F:iron ion binding"/>
    <property type="evidence" value="ECO:0007669"/>
    <property type="project" value="UniProtKB-UniRule"/>
</dbReference>
<dbReference type="GO" id="GO:0042279">
    <property type="term" value="F:nitrite reductase (cytochrome, ammonia-forming) activity"/>
    <property type="evidence" value="ECO:0007669"/>
    <property type="project" value="UniProtKB-UniRule"/>
</dbReference>
<dbReference type="GO" id="GO:0019645">
    <property type="term" value="P:anaerobic electron transport chain"/>
    <property type="evidence" value="ECO:0007669"/>
    <property type="project" value="TreeGrafter"/>
</dbReference>
<dbReference type="GO" id="GO:0042128">
    <property type="term" value="P:nitrate assimilation"/>
    <property type="evidence" value="ECO:0007669"/>
    <property type="project" value="UniProtKB-UniRule"/>
</dbReference>
<dbReference type="CDD" id="cd00548">
    <property type="entry name" value="NrfA-like"/>
    <property type="match status" value="1"/>
</dbReference>
<dbReference type="FunFam" id="1.10.1130.10:FF:000002">
    <property type="entry name" value="Cytochrome c-552"/>
    <property type="match status" value="1"/>
</dbReference>
<dbReference type="FunFam" id="1.20.140.10:FF:000014">
    <property type="entry name" value="Cytochrome c-552"/>
    <property type="match status" value="1"/>
</dbReference>
<dbReference type="Gene3D" id="1.20.140.10">
    <property type="entry name" value="Butyryl-CoA Dehydrogenase, subunit A, domain 3"/>
    <property type="match status" value="1"/>
</dbReference>
<dbReference type="Gene3D" id="1.10.1130.10">
    <property type="entry name" value="Flavocytochrome C3, Chain A"/>
    <property type="match status" value="1"/>
</dbReference>
<dbReference type="HAMAP" id="MF_01182">
    <property type="entry name" value="Cytochrom_C552"/>
    <property type="match status" value="1"/>
</dbReference>
<dbReference type="InterPro" id="IPR003321">
    <property type="entry name" value="Cyt_c552"/>
</dbReference>
<dbReference type="InterPro" id="IPR017570">
    <property type="entry name" value="Cyt_c_NO2Rdtase_formate-dep"/>
</dbReference>
<dbReference type="InterPro" id="IPR036280">
    <property type="entry name" value="Multihaem_cyt_sf"/>
</dbReference>
<dbReference type="NCBIfam" id="TIGR03152">
    <property type="entry name" value="cyto_c552_HCOOH"/>
    <property type="match status" value="1"/>
</dbReference>
<dbReference type="NCBIfam" id="NF008339">
    <property type="entry name" value="PRK11125.1"/>
    <property type="match status" value="1"/>
</dbReference>
<dbReference type="PANTHER" id="PTHR30633:SF0">
    <property type="entry name" value="CYTOCHROME C-552"/>
    <property type="match status" value="1"/>
</dbReference>
<dbReference type="PANTHER" id="PTHR30633">
    <property type="entry name" value="CYTOCHROME C-552 RESPIRATORY NITRITE REDUCTASE"/>
    <property type="match status" value="1"/>
</dbReference>
<dbReference type="Pfam" id="PF02335">
    <property type="entry name" value="Cytochrom_C552"/>
    <property type="match status" value="1"/>
</dbReference>
<dbReference type="PIRSF" id="PIRSF000243">
    <property type="entry name" value="Cyt_c552"/>
    <property type="match status" value="1"/>
</dbReference>
<dbReference type="SUPFAM" id="SSF48695">
    <property type="entry name" value="Multiheme cytochromes"/>
    <property type="match status" value="1"/>
</dbReference>
<dbReference type="PROSITE" id="PS51008">
    <property type="entry name" value="MULTIHEME_CYTC"/>
    <property type="match status" value="1"/>
</dbReference>
<proteinExistence type="inferred from homology"/>
<comment type="function">
    <text evidence="1">Catalyzes the reduction of nitrite to ammonia, consuming six electrons in the process.</text>
</comment>
<comment type="catalytic activity">
    <reaction evidence="1">
        <text>6 Fe(III)-[cytochrome c] + NH4(+) + 2 H2O = 6 Fe(II)-[cytochrome c] + nitrite + 8 H(+)</text>
        <dbReference type="Rhea" id="RHEA:13089"/>
        <dbReference type="Rhea" id="RHEA-COMP:10350"/>
        <dbReference type="Rhea" id="RHEA-COMP:14399"/>
        <dbReference type="ChEBI" id="CHEBI:15377"/>
        <dbReference type="ChEBI" id="CHEBI:15378"/>
        <dbReference type="ChEBI" id="CHEBI:16301"/>
        <dbReference type="ChEBI" id="CHEBI:28938"/>
        <dbReference type="ChEBI" id="CHEBI:29033"/>
        <dbReference type="ChEBI" id="CHEBI:29034"/>
        <dbReference type="EC" id="1.7.2.2"/>
    </reaction>
</comment>
<comment type="cofactor">
    <cofactor evidence="1">
        <name>Ca(2+)</name>
        <dbReference type="ChEBI" id="CHEBI:29108"/>
    </cofactor>
    <text evidence="1">Binds 1 Ca(2+) ion per monomer.</text>
</comment>
<comment type="cofactor">
    <cofactor evidence="1">
        <name>heme c</name>
        <dbReference type="ChEBI" id="CHEBI:61717"/>
    </cofactor>
    <text evidence="1">Binds 5 heme c groups covalently per monomer.</text>
</comment>
<comment type="pathway">
    <text evidence="1">Nitrogen metabolism; nitrate reduction (assimilation).</text>
</comment>
<comment type="subcellular location">
    <subcellularLocation>
        <location evidence="1">Periplasm</location>
    </subcellularLocation>
</comment>
<comment type="similarity">
    <text evidence="1">Belongs to the cytochrome c-552 family.</text>
</comment>
<reference key="1">
    <citation type="journal article" date="2011" name="J. Bacteriol.">
        <title>Comparative genomics of 28 Salmonella enterica isolates: evidence for CRISPR-mediated adaptive sublineage evolution.</title>
        <authorList>
            <person name="Fricke W.F."/>
            <person name="Mammel M.K."/>
            <person name="McDermott P.F."/>
            <person name="Tartera C."/>
            <person name="White D.G."/>
            <person name="Leclerc J.E."/>
            <person name="Ravel J."/>
            <person name="Cebula T.A."/>
        </authorList>
    </citation>
    <scope>NUCLEOTIDE SEQUENCE [LARGE SCALE GENOMIC DNA]</scope>
    <source>
        <strain>CT_02021853</strain>
    </source>
</reference>
<name>NRFA_SALDC</name>
<organism>
    <name type="scientific">Salmonella dublin (strain CT_02021853)</name>
    <dbReference type="NCBI Taxonomy" id="439851"/>
    <lineage>
        <taxon>Bacteria</taxon>
        <taxon>Pseudomonadati</taxon>
        <taxon>Pseudomonadota</taxon>
        <taxon>Gammaproteobacteria</taxon>
        <taxon>Enterobacterales</taxon>
        <taxon>Enterobacteriaceae</taxon>
        <taxon>Salmonella</taxon>
    </lineage>
</organism>
<protein>
    <recommendedName>
        <fullName evidence="1">Cytochrome c-552</fullName>
        <ecNumber evidence="1">1.7.2.2</ecNumber>
    </recommendedName>
    <alternativeName>
        <fullName evidence="1">Ammonia-forming cytochrome c nitrite reductase</fullName>
        <shortName evidence="1">Cytochrome c nitrite reductase</shortName>
    </alternativeName>
</protein>
<accession>B5FRF3</accession>